<keyword id="KW-0067">ATP-binding</keyword>
<keyword id="KW-0315">Glutamine amidotransferase</keyword>
<keyword id="KW-0436">Ligase</keyword>
<keyword id="KW-0460">Magnesium</keyword>
<keyword id="KW-0479">Metal-binding</keyword>
<keyword id="KW-0547">Nucleotide-binding</keyword>
<keyword id="KW-0665">Pyrimidine biosynthesis</keyword>
<keyword id="KW-1185">Reference proteome</keyword>
<sequence>MTKFIFVTGGVVSSLGKGITASALGCLLKNRGLSVAIQKFDPYINIDPGTMSPYQHGEVFVTDDGAETDLDLGHYERFIDVPVSKNSNVTTGKIYWSVLNKERRGDYLGGTVQVIPHITNEIKERIYRVARENHPDIVITEIGGTVGDIESLPYLEAIRQMRSDIGRENVLYLHVTLIPYLNASGELKTKPTQHSVKELRGIGIQPNILVCRTEHAISEDMKEKLALFCDIDREAIIQMVDAKSIYEVPLNILEEGMDDIVLKILGLEAPPADMTDWRAMVDRINNPQSETEIAIVGKYVELPDAYLSVAEALRHAGIEHLAKVKIRWVNSEEIEGSSAAELLKGVSGILVPGGFGNRGIEGKIEAIRYARENKIPFLGICLGMQTAVIEFARNVCGMTNANSSEFDVDAPYPVIDLLPEQKEIEDKGGTMRLGISPVKLIESTLVSSIYQDEVIYERHRHRYEVNNQFRAELEKGGLKFSGTSPDGRLVEITEYPDHPWFVASQFHPEFKSRPYRSHPLFREFVKATLANR</sequence>
<dbReference type="EC" id="6.3.4.2" evidence="1"/>
<dbReference type="EMBL" id="AP008230">
    <property type="protein sequence ID" value="BAE86733.1"/>
    <property type="molecule type" value="Genomic_DNA"/>
</dbReference>
<dbReference type="RefSeq" id="WP_011462257.1">
    <property type="nucleotide sequence ID" value="NC_007907.1"/>
</dbReference>
<dbReference type="SMR" id="Q24MK9"/>
<dbReference type="STRING" id="138119.DSY4944"/>
<dbReference type="MEROPS" id="C26.964"/>
<dbReference type="KEGG" id="dsy:DSY4944"/>
<dbReference type="eggNOG" id="COG0504">
    <property type="taxonomic scope" value="Bacteria"/>
</dbReference>
<dbReference type="HOGENOM" id="CLU_011675_5_0_9"/>
<dbReference type="UniPathway" id="UPA00159">
    <property type="reaction ID" value="UER00277"/>
</dbReference>
<dbReference type="Proteomes" id="UP000001946">
    <property type="component" value="Chromosome"/>
</dbReference>
<dbReference type="GO" id="GO:0005829">
    <property type="term" value="C:cytosol"/>
    <property type="evidence" value="ECO:0007669"/>
    <property type="project" value="TreeGrafter"/>
</dbReference>
<dbReference type="GO" id="GO:0005524">
    <property type="term" value="F:ATP binding"/>
    <property type="evidence" value="ECO:0007669"/>
    <property type="project" value="UniProtKB-KW"/>
</dbReference>
<dbReference type="GO" id="GO:0003883">
    <property type="term" value="F:CTP synthase activity"/>
    <property type="evidence" value="ECO:0007669"/>
    <property type="project" value="UniProtKB-UniRule"/>
</dbReference>
<dbReference type="GO" id="GO:0004359">
    <property type="term" value="F:glutaminase activity"/>
    <property type="evidence" value="ECO:0007669"/>
    <property type="project" value="RHEA"/>
</dbReference>
<dbReference type="GO" id="GO:0042802">
    <property type="term" value="F:identical protein binding"/>
    <property type="evidence" value="ECO:0007669"/>
    <property type="project" value="TreeGrafter"/>
</dbReference>
<dbReference type="GO" id="GO:0046872">
    <property type="term" value="F:metal ion binding"/>
    <property type="evidence" value="ECO:0007669"/>
    <property type="project" value="UniProtKB-KW"/>
</dbReference>
<dbReference type="GO" id="GO:0044210">
    <property type="term" value="P:'de novo' CTP biosynthetic process"/>
    <property type="evidence" value="ECO:0007669"/>
    <property type="project" value="UniProtKB-UniRule"/>
</dbReference>
<dbReference type="GO" id="GO:0019856">
    <property type="term" value="P:pyrimidine nucleobase biosynthetic process"/>
    <property type="evidence" value="ECO:0007669"/>
    <property type="project" value="TreeGrafter"/>
</dbReference>
<dbReference type="CDD" id="cd03113">
    <property type="entry name" value="CTPS_N"/>
    <property type="match status" value="1"/>
</dbReference>
<dbReference type="CDD" id="cd01746">
    <property type="entry name" value="GATase1_CTP_Synthase"/>
    <property type="match status" value="1"/>
</dbReference>
<dbReference type="FunFam" id="3.40.50.300:FF:000009">
    <property type="entry name" value="CTP synthase"/>
    <property type="match status" value="1"/>
</dbReference>
<dbReference type="FunFam" id="3.40.50.880:FF:000002">
    <property type="entry name" value="CTP synthase"/>
    <property type="match status" value="1"/>
</dbReference>
<dbReference type="Gene3D" id="3.40.50.880">
    <property type="match status" value="1"/>
</dbReference>
<dbReference type="Gene3D" id="3.40.50.300">
    <property type="entry name" value="P-loop containing nucleotide triphosphate hydrolases"/>
    <property type="match status" value="1"/>
</dbReference>
<dbReference type="HAMAP" id="MF_01227">
    <property type="entry name" value="PyrG"/>
    <property type="match status" value="1"/>
</dbReference>
<dbReference type="InterPro" id="IPR029062">
    <property type="entry name" value="Class_I_gatase-like"/>
</dbReference>
<dbReference type="InterPro" id="IPR004468">
    <property type="entry name" value="CTP_synthase"/>
</dbReference>
<dbReference type="InterPro" id="IPR017456">
    <property type="entry name" value="CTP_synthase_N"/>
</dbReference>
<dbReference type="InterPro" id="IPR017926">
    <property type="entry name" value="GATASE"/>
</dbReference>
<dbReference type="InterPro" id="IPR033828">
    <property type="entry name" value="GATase1_CTP_Synthase"/>
</dbReference>
<dbReference type="InterPro" id="IPR027417">
    <property type="entry name" value="P-loop_NTPase"/>
</dbReference>
<dbReference type="NCBIfam" id="NF003792">
    <property type="entry name" value="PRK05380.1"/>
    <property type="match status" value="1"/>
</dbReference>
<dbReference type="NCBIfam" id="TIGR00337">
    <property type="entry name" value="PyrG"/>
    <property type="match status" value="1"/>
</dbReference>
<dbReference type="PANTHER" id="PTHR11550">
    <property type="entry name" value="CTP SYNTHASE"/>
    <property type="match status" value="1"/>
</dbReference>
<dbReference type="PANTHER" id="PTHR11550:SF0">
    <property type="entry name" value="CTP SYNTHASE-RELATED"/>
    <property type="match status" value="1"/>
</dbReference>
<dbReference type="Pfam" id="PF06418">
    <property type="entry name" value="CTP_synth_N"/>
    <property type="match status" value="1"/>
</dbReference>
<dbReference type="Pfam" id="PF00117">
    <property type="entry name" value="GATase"/>
    <property type="match status" value="1"/>
</dbReference>
<dbReference type="SUPFAM" id="SSF52317">
    <property type="entry name" value="Class I glutamine amidotransferase-like"/>
    <property type="match status" value="1"/>
</dbReference>
<dbReference type="SUPFAM" id="SSF52540">
    <property type="entry name" value="P-loop containing nucleoside triphosphate hydrolases"/>
    <property type="match status" value="1"/>
</dbReference>
<dbReference type="PROSITE" id="PS51273">
    <property type="entry name" value="GATASE_TYPE_1"/>
    <property type="match status" value="1"/>
</dbReference>
<comment type="function">
    <text evidence="1">Catalyzes the ATP-dependent amination of UTP to CTP with either L-glutamine or ammonia as the source of nitrogen. Regulates intracellular CTP levels through interactions with the four ribonucleotide triphosphates.</text>
</comment>
<comment type="catalytic activity">
    <reaction evidence="1">
        <text>UTP + L-glutamine + ATP + H2O = CTP + L-glutamate + ADP + phosphate + 2 H(+)</text>
        <dbReference type="Rhea" id="RHEA:26426"/>
        <dbReference type="ChEBI" id="CHEBI:15377"/>
        <dbReference type="ChEBI" id="CHEBI:15378"/>
        <dbReference type="ChEBI" id="CHEBI:29985"/>
        <dbReference type="ChEBI" id="CHEBI:30616"/>
        <dbReference type="ChEBI" id="CHEBI:37563"/>
        <dbReference type="ChEBI" id="CHEBI:43474"/>
        <dbReference type="ChEBI" id="CHEBI:46398"/>
        <dbReference type="ChEBI" id="CHEBI:58359"/>
        <dbReference type="ChEBI" id="CHEBI:456216"/>
        <dbReference type="EC" id="6.3.4.2"/>
    </reaction>
</comment>
<comment type="catalytic activity">
    <reaction evidence="1">
        <text>L-glutamine + H2O = L-glutamate + NH4(+)</text>
        <dbReference type="Rhea" id="RHEA:15889"/>
        <dbReference type="ChEBI" id="CHEBI:15377"/>
        <dbReference type="ChEBI" id="CHEBI:28938"/>
        <dbReference type="ChEBI" id="CHEBI:29985"/>
        <dbReference type="ChEBI" id="CHEBI:58359"/>
    </reaction>
</comment>
<comment type="catalytic activity">
    <reaction evidence="1">
        <text>UTP + NH4(+) + ATP = CTP + ADP + phosphate + 2 H(+)</text>
        <dbReference type="Rhea" id="RHEA:16597"/>
        <dbReference type="ChEBI" id="CHEBI:15378"/>
        <dbReference type="ChEBI" id="CHEBI:28938"/>
        <dbReference type="ChEBI" id="CHEBI:30616"/>
        <dbReference type="ChEBI" id="CHEBI:37563"/>
        <dbReference type="ChEBI" id="CHEBI:43474"/>
        <dbReference type="ChEBI" id="CHEBI:46398"/>
        <dbReference type="ChEBI" id="CHEBI:456216"/>
    </reaction>
</comment>
<comment type="activity regulation">
    <text evidence="1">Allosterically activated by GTP, when glutamine is the substrate; GTP has no effect on the reaction when ammonia is the substrate. The allosteric effector GTP functions by stabilizing the protein conformation that binds the tetrahedral intermediate(s) formed during glutamine hydrolysis. Inhibited by the product CTP, via allosteric rather than competitive inhibition.</text>
</comment>
<comment type="pathway">
    <text evidence="1">Pyrimidine metabolism; CTP biosynthesis via de novo pathway; CTP from UDP: step 2/2.</text>
</comment>
<comment type="subunit">
    <text evidence="1">Homotetramer.</text>
</comment>
<comment type="miscellaneous">
    <text evidence="1">CTPSs have evolved a hybrid strategy for distinguishing between UTP and CTP. The overlapping regions of the product feedback inhibitory and substrate sites recognize a common feature in both compounds, the triphosphate moiety. To differentiate isosteric substrate and product pyrimidine rings, an additional pocket far from the expected kinase/ligase catalytic site, specifically recognizes the cytosine and ribose portions of the product inhibitor.</text>
</comment>
<comment type="similarity">
    <text evidence="1">Belongs to the CTP synthase family.</text>
</comment>
<gene>
    <name evidence="1" type="primary">pyrG</name>
    <name type="ordered locus">DSY4944</name>
</gene>
<accession>Q24MK9</accession>
<protein>
    <recommendedName>
        <fullName evidence="1">CTP synthase</fullName>
        <ecNumber evidence="1">6.3.4.2</ecNumber>
    </recommendedName>
    <alternativeName>
        <fullName evidence="1">Cytidine 5'-triphosphate synthase</fullName>
    </alternativeName>
    <alternativeName>
        <fullName evidence="1">Cytidine triphosphate synthetase</fullName>
        <shortName evidence="1">CTP synthetase</shortName>
        <shortName evidence="1">CTPS</shortName>
    </alternativeName>
    <alternativeName>
        <fullName evidence="1">UTP--ammonia ligase</fullName>
    </alternativeName>
</protein>
<proteinExistence type="inferred from homology"/>
<feature type="chain" id="PRO_0000266107" description="CTP synthase">
    <location>
        <begin position="1"/>
        <end position="532"/>
    </location>
</feature>
<feature type="domain" description="Glutamine amidotransferase type-1" evidence="1">
    <location>
        <begin position="292"/>
        <end position="532"/>
    </location>
</feature>
<feature type="region of interest" description="Amidoligase domain" evidence="1">
    <location>
        <begin position="1"/>
        <end position="267"/>
    </location>
</feature>
<feature type="active site" description="Nucleophile; for glutamine hydrolysis" evidence="1">
    <location>
        <position position="381"/>
    </location>
</feature>
<feature type="active site" evidence="1">
    <location>
        <position position="507"/>
    </location>
</feature>
<feature type="active site" evidence="1">
    <location>
        <position position="509"/>
    </location>
</feature>
<feature type="binding site" evidence="1">
    <location>
        <position position="13"/>
    </location>
    <ligand>
        <name>CTP</name>
        <dbReference type="ChEBI" id="CHEBI:37563"/>
        <note>allosteric inhibitor</note>
    </ligand>
</feature>
<feature type="binding site" evidence="1">
    <location>
        <position position="13"/>
    </location>
    <ligand>
        <name>UTP</name>
        <dbReference type="ChEBI" id="CHEBI:46398"/>
    </ligand>
</feature>
<feature type="binding site" evidence="1">
    <location>
        <begin position="14"/>
        <end position="19"/>
    </location>
    <ligand>
        <name>ATP</name>
        <dbReference type="ChEBI" id="CHEBI:30616"/>
    </ligand>
</feature>
<feature type="binding site" evidence="1">
    <location>
        <position position="54"/>
    </location>
    <ligand>
        <name>L-glutamine</name>
        <dbReference type="ChEBI" id="CHEBI:58359"/>
    </ligand>
</feature>
<feature type="binding site" evidence="1">
    <location>
        <position position="71"/>
    </location>
    <ligand>
        <name>ATP</name>
        <dbReference type="ChEBI" id="CHEBI:30616"/>
    </ligand>
</feature>
<feature type="binding site" evidence="1">
    <location>
        <position position="71"/>
    </location>
    <ligand>
        <name>Mg(2+)</name>
        <dbReference type="ChEBI" id="CHEBI:18420"/>
    </ligand>
</feature>
<feature type="binding site" evidence="1">
    <location>
        <position position="141"/>
    </location>
    <ligand>
        <name>Mg(2+)</name>
        <dbReference type="ChEBI" id="CHEBI:18420"/>
    </ligand>
</feature>
<feature type="binding site" evidence="1">
    <location>
        <begin position="148"/>
        <end position="150"/>
    </location>
    <ligand>
        <name>CTP</name>
        <dbReference type="ChEBI" id="CHEBI:37563"/>
        <note>allosteric inhibitor</note>
    </ligand>
</feature>
<feature type="binding site" evidence="1">
    <location>
        <begin position="188"/>
        <end position="193"/>
    </location>
    <ligand>
        <name>CTP</name>
        <dbReference type="ChEBI" id="CHEBI:37563"/>
        <note>allosteric inhibitor</note>
    </ligand>
</feature>
<feature type="binding site" evidence="1">
    <location>
        <begin position="188"/>
        <end position="193"/>
    </location>
    <ligand>
        <name>UTP</name>
        <dbReference type="ChEBI" id="CHEBI:46398"/>
    </ligand>
</feature>
<feature type="binding site" evidence="1">
    <location>
        <position position="224"/>
    </location>
    <ligand>
        <name>CTP</name>
        <dbReference type="ChEBI" id="CHEBI:37563"/>
        <note>allosteric inhibitor</note>
    </ligand>
</feature>
<feature type="binding site" evidence="1">
    <location>
        <position position="224"/>
    </location>
    <ligand>
        <name>UTP</name>
        <dbReference type="ChEBI" id="CHEBI:46398"/>
    </ligand>
</feature>
<feature type="binding site" evidence="1">
    <location>
        <position position="354"/>
    </location>
    <ligand>
        <name>L-glutamine</name>
        <dbReference type="ChEBI" id="CHEBI:58359"/>
    </ligand>
</feature>
<feature type="binding site" evidence="1">
    <location>
        <begin position="382"/>
        <end position="385"/>
    </location>
    <ligand>
        <name>L-glutamine</name>
        <dbReference type="ChEBI" id="CHEBI:58359"/>
    </ligand>
</feature>
<feature type="binding site" evidence="1">
    <location>
        <position position="405"/>
    </location>
    <ligand>
        <name>L-glutamine</name>
        <dbReference type="ChEBI" id="CHEBI:58359"/>
    </ligand>
</feature>
<feature type="binding site" evidence="1">
    <location>
        <position position="462"/>
    </location>
    <ligand>
        <name>L-glutamine</name>
        <dbReference type="ChEBI" id="CHEBI:58359"/>
    </ligand>
</feature>
<organism>
    <name type="scientific">Desulfitobacterium hafniense (strain Y51)</name>
    <dbReference type="NCBI Taxonomy" id="138119"/>
    <lineage>
        <taxon>Bacteria</taxon>
        <taxon>Bacillati</taxon>
        <taxon>Bacillota</taxon>
        <taxon>Clostridia</taxon>
        <taxon>Eubacteriales</taxon>
        <taxon>Desulfitobacteriaceae</taxon>
        <taxon>Desulfitobacterium</taxon>
    </lineage>
</organism>
<evidence type="ECO:0000255" key="1">
    <source>
        <dbReference type="HAMAP-Rule" id="MF_01227"/>
    </source>
</evidence>
<name>PYRG_DESHY</name>
<reference key="1">
    <citation type="journal article" date="2006" name="J. Bacteriol.">
        <title>Complete genome sequence of the dehalorespiring bacterium Desulfitobacterium hafniense Y51 and comparison with Dehalococcoides ethenogenes 195.</title>
        <authorList>
            <person name="Nonaka H."/>
            <person name="Keresztes G."/>
            <person name="Shinoda Y."/>
            <person name="Ikenaga Y."/>
            <person name="Abe M."/>
            <person name="Naito K."/>
            <person name="Inatomi K."/>
            <person name="Furukawa K."/>
            <person name="Inui M."/>
            <person name="Yukawa H."/>
        </authorList>
    </citation>
    <scope>NUCLEOTIDE SEQUENCE [LARGE SCALE GENOMIC DNA]</scope>
    <source>
        <strain>Y51</strain>
    </source>
</reference>